<accession>Q8S091</accession>
<accession>A0A0P0VBW7</accession>
<protein>
    <recommendedName>
        <fullName>Thioredoxin F, chloroplastic</fullName>
        <shortName>OsTrxf</shortName>
    </recommendedName>
    <alternativeName>
        <fullName>OsTrx03</fullName>
    </alternativeName>
</protein>
<name>TRXF_ORYSJ</name>
<keyword id="KW-0150">Chloroplast</keyword>
<keyword id="KW-1015">Disulfide bond</keyword>
<keyword id="KW-0249">Electron transport</keyword>
<keyword id="KW-0934">Plastid</keyword>
<keyword id="KW-0676">Redox-active center</keyword>
<keyword id="KW-1185">Reference proteome</keyword>
<keyword id="KW-0809">Transit peptide</keyword>
<keyword id="KW-0813">Transport</keyword>
<feature type="transit peptide" description="Chloroplast" evidence="2">
    <location>
        <begin position="1"/>
        <end position="72"/>
    </location>
</feature>
<feature type="chain" id="PRO_0000394825" description="Thioredoxin F, chloroplastic">
    <location>
        <begin position="73"/>
        <end position="187"/>
    </location>
</feature>
<feature type="domain" description="Thioredoxin" evidence="3">
    <location>
        <begin position="73"/>
        <end position="186"/>
    </location>
</feature>
<feature type="active site" description="Nucleophile" evidence="1">
    <location>
        <position position="111"/>
    </location>
</feature>
<feature type="active site" description="Nucleophile" evidence="1">
    <location>
        <position position="114"/>
    </location>
</feature>
<feature type="site" description="Deprotonates C-terminal active site Cys" evidence="1">
    <location>
        <position position="105"/>
    </location>
</feature>
<feature type="site" description="Contributes to redox potential value" evidence="1">
    <location>
        <position position="112"/>
    </location>
</feature>
<feature type="site" description="Contributes to redox potential value" evidence="1">
    <location>
        <position position="113"/>
    </location>
</feature>
<feature type="disulfide bond" description="Redox-active" evidence="3">
    <location>
        <begin position="111"/>
        <end position="114"/>
    </location>
</feature>
<reference key="1">
    <citation type="journal article" date="2002" name="Nature">
        <title>The genome sequence and structure of rice chromosome 1.</title>
        <authorList>
            <person name="Sasaki T."/>
            <person name="Matsumoto T."/>
            <person name="Yamamoto K."/>
            <person name="Sakata K."/>
            <person name="Baba T."/>
            <person name="Katayose Y."/>
            <person name="Wu J."/>
            <person name="Niimura Y."/>
            <person name="Cheng Z."/>
            <person name="Nagamura Y."/>
            <person name="Antonio B.A."/>
            <person name="Kanamori H."/>
            <person name="Hosokawa S."/>
            <person name="Masukawa M."/>
            <person name="Arikawa K."/>
            <person name="Chiden Y."/>
            <person name="Hayashi M."/>
            <person name="Okamoto M."/>
            <person name="Ando T."/>
            <person name="Aoki H."/>
            <person name="Arita K."/>
            <person name="Hamada M."/>
            <person name="Harada C."/>
            <person name="Hijishita S."/>
            <person name="Honda M."/>
            <person name="Ichikawa Y."/>
            <person name="Idonuma A."/>
            <person name="Iijima M."/>
            <person name="Ikeda M."/>
            <person name="Ikeno M."/>
            <person name="Ito S."/>
            <person name="Ito T."/>
            <person name="Ito Y."/>
            <person name="Ito Y."/>
            <person name="Iwabuchi A."/>
            <person name="Kamiya K."/>
            <person name="Karasawa W."/>
            <person name="Katagiri S."/>
            <person name="Kikuta A."/>
            <person name="Kobayashi N."/>
            <person name="Kono I."/>
            <person name="Machita K."/>
            <person name="Maehara T."/>
            <person name="Mizuno H."/>
            <person name="Mizubayashi T."/>
            <person name="Mukai Y."/>
            <person name="Nagasaki H."/>
            <person name="Nakashima M."/>
            <person name="Nakama Y."/>
            <person name="Nakamichi Y."/>
            <person name="Nakamura M."/>
            <person name="Namiki N."/>
            <person name="Negishi M."/>
            <person name="Ohta I."/>
            <person name="Ono N."/>
            <person name="Saji S."/>
            <person name="Sakai K."/>
            <person name="Shibata M."/>
            <person name="Shimokawa T."/>
            <person name="Shomura A."/>
            <person name="Song J."/>
            <person name="Takazaki Y."/>
            <person name="Terasawa K."/>
            <person name="Tsuji K."/>
            <person name="Waki K."/>
            <person name="Yamagata H."/>
            <person name="Yamane H."/>
            <person name="Yoshiki S."/>
            <person name="Yoshihara R."/>
            <person name="Yukawa K."/>
            <person name="Zhong H."/>
            <person name="Iwama H."/>
            <person name="Endo T."/>
            <person name="Ito H."/>
            <person name="Hahn J.H."/>
            <person name="Kim H.-I."/>
            <person name="Eun M.-Y."/>
            <person name="Yano M."/>
            <person name="Jiang J."/>
            <person name="Gojobori T."/>
        </authorList>
    </citation>
    <scope>NUCLEOTIDE SEQUENCE [LARGE SCALE GENOMIC DNA]</scope>
    <source>
        <strain>cv. Nipponbare</strain>
    </source>
</reference>
<reference key="2">
    <citation type="journal article" date="2005" name="Nature">
        <title>The map-based sequence of the rice genome.</title>
        <authorList>
            <consortium name="International rice genome sequencing project (IRGSP)"/>
        </authorList>
    </citation>
    <scope>NUCLEOTIDE SEQUENCE [LARGE SCALE GENOMIC DNA]</scope>
    <source>
        <strain>cv. Nipponbare</strain>
    </source>
</reference>
<reference key="3">
    <citation type="journal article" date="2008" name="Nucleic Acids Res.">
        <title>The rice annotation project database (RAP-DB): 2008 update.</title>
        <authorList>
            <consortium name="The rice annotation project (RAP)"/>
        </authorList>
    </citation>
    <scope>GENOME REANNOTATION</scope>
    <source>
        <strain>cv. Nipponbare</strain>
    </source>
</reference>
<reference key="4">
    <citation type="journal article" date="2013" name="Rice">
        <title>Improvement of the Oryza sativa Nipponbare reference genome using next generation sequence and optical map data.</title>
        <authorList>
            <person name="Kawahara Y."/>
            <person name="de la Bastide M."/>
            <person name="Hamilton J.P."/>
            <person name="Kanamori H."/>
            <person name="McCombie W.R."/>
            <person name="Ouyang S."/>
            <person name="Schwartz D.C."/>
            <person name="Tanaka T."/>
            <person name="Wu J."/>
            <person name="Zhou S."/>
            <person name="Childs K.L."/>
            <person name="Davidson R.M."/>
            <person name="Lin H."/>
            <person name="Quesada-Ocampo L."/>
            <person name="Vaillancourt B."/>
            <person name="Sakai H."/>
            <person name="Lee S.S."/>
            <person name="Kim J."/>
            <person name="Numa H."/>
            <person name="Itoh T."/>
            <person name="Buell C.R."/>
            <person name="Matsumoto T."/>
        </authorList>
    </citation>
    <scope>GENOME REANNOTATION</scope>
    <source>
        <strain>cv. Nipponbare</strain>
    </source>
</reference>
<reference key="5">
    <citation type="journal article" date="2005" name="PLoS Biol.">
        <title>The genomes of Oryza sativa: a history of duplications.</title>
        <authorList>
            <person name="Yu J."/>
            <person name="Wang J."/>
            <person name="Lin W."/>
            <person name="Li S."/>
            <person name="Li H."/>
            <person name="Zhou J."/>
            <person name="Ni P."/>
            <person name="Dong W."/>
            <person name="Hu S."/>
            <person name="Zeng C."/>
            <person name="Zhang J."/>
            <person name="Zhang Y."/>
            <person name="Li R."/>
            <person name="Xu Z."/>
            <person name="Li S."/>
            <person name="Li X."/>
            <person name="Zheng H."/>
            <person name="Cong L."/>
            <person name="Lin L."/>
            <person name="Yin J."/>
            <person name="Geng J."/>
            <person name="Li G."/>
            <person name="Shi J."/>
            <person name="Liu J."/>
            <person name="Lv H."/>
            <person name="Li J."/>
            <person name="Wang J."/>
            <person name="Deng Y."/>
            <person name="Ran L."/>
            <person name="Shi X."/>
            <person name="Wang X."/>
            <person name="Wu Q."/>
            <person name="Li C."/>
            <person name="Ren X."/>
            <person name="Wang J."/>
            <person name="Wang X."/>
            <person name="Li D."/>
            <person name="Liu D."/>
            <person name="Zhang X."/>
            <person name="Ji Z."/>
            <person name="Zhao W."/>
            <person name="Sun Y."/>
            <person name="Zhang Z."/>
            <person name="Bao J."/>
            <person name="Han Y."/>
            <person name="Dong L."/>
            <person name="Ji J."/>
            <person name="Chen P."/>
            <person name="Wu S."/>
            <person name="Liu J."/>
            <person name="Xiao Y."/>
            <person name="Bu D."/>
            <person name="Tan J."/>
            <person name="Yang L."/>
            <person name="Ye C."/>
            <person name="Zhang J."/>
            <person name="Xu J."/>
            <person name="Zhou Y."/>
            <person name="Yu Y."/>
            <person name="Zhang B."/>
            <person name="Zhuang S."/>
            <person name="Wei H."/>
            <person name="Liu B."/>
            <person name="Lei M."/>
            <person name="Yu H."/>
            <person name="Li Y."/>
            <person name="Xu H."/>
            <person name="Wei S."/>
            <person name="He X."/>
            <person name="Fang L."/>
            <person name="Zhang Z."/>
            <person name="Zhang Y."/>
            <person name="Huang X."/>
            <person name="Su Z."/>
            <person name="Tong W."/>
            <person name="Li J."/>
            <person name="Tong Z."/>
            <person name="Li S."/>
            <person name="Ye J."/>
            <person name="Wang L."/>
            <person name="Fang L."/>
            <person name="Lei T."/>
            <person name="Chen C.-S."/>
            <person name="Chen H.-C."/>
            <person name="Xu Z."/>
            <person name="Li H."/>
            <person name="Huang H."/>
            <person name="Zhang F."/>
            <person name="Xu H."/>
            <person name="Li N."/>
            <person name="Zhao C."/>
            <person name="Li S."/>
            <person name="Dong L."/>
            <person name="Huang Y."/>
            <person name="Li L."/>
            <person name="Xi Y."/>
            <person name="Qi Q."/>
            <person name="Li W."/>
            <person name="Zhang B."/>
            <person name="Hu W."/>
            <person name="Zhang Y."/>
            <person name="Tian X."/>
            <person name="Jiao Y."/>
            <person name="Liang X."/>
            <person name="Jin J."/>
            <person name="Gao L."/>
            <person name="Zheng W."/>
            <person name="Hao B."/>
            <person name="Liu S.-M."/>
            <person name="Wang W."/>
            <person name="Yuan L."/>
            <person name="Cao M."/>
            <person name="McDermott J."/>
            <person name="Samudrala R."/>
            <person name="Wang J."/>
            <person name="Wong G.K.-S."/>
            <person name="Yang H."/>
        </authorList>
    </citation>
    <scope>NUCLEOTIDE SEQUENCE [LARGE SCALE GENOMIC DNA]</scope>
    <source>
        <strain>cv. Nipponbare</strain>
    </source>
</reference>
<reference key="6">
    <citation type="journal article" date="2003" name="Science">
        <title>Collection, mapping, and annotation of over 28,000 cDNA clones from japonica rice.</title>
        <authorList>
            <consortium name="The rice full-length cDNA consortium"/>
        </authorList>
    </citation>
    <scope>NUCLEOTIDE SEQUENCE [LARGE SCALE MRNA]</scope>
    <source>
        <strain>cv. Nipponbare</strain>
    </source>
</reference>
<reference key="7">
    <citation type="journal article" date="2009" name="Mol. Plant">
        <title>Comparative genomic study of the thioredoxin family in photosynthetic organisms with emphasis on Populus trichocarpa.</title>
        <authorList>
            <person name="Chibani K."/>
            <person name="Wingsle G."/>
            <person name="Jacquot J.P."/>
            <person name="Gelhaye E."/>
            <person name="Rouhier N."/>
        </authorList>
    </citation>
    <scope>GENE FAMILY</scope>
    <scope>NOMENCLATURE</scope>
</reference>
<gene>
    <name type="ordered locus">Os01g0913000</name>
    <name type="ordered locus">LOC_Os01g68480</name>
    <name type="ORF">OsJ_04513</name>
    <name type="ORF">P0470A12.34</name>
</gene>
<evidence type="ECO:0000250" key="1"/>
<evidence type="ECO:0000255" key="2"/>
<evidence type="ECO:0000255" key="3">
    <source>
        <dbReference type="PROSITE-ProRule" id="PRU00691"/>
    </source>
</evidence>
<evidence type="ECO:0000305" key="4"/>
<sequence>MALRLSVSSSHGPASSPAISTCRPAACGRFPALLGGGVASQRRSLTVVSGPETRAVIPVRSSGSDTATVGAEAEAVAVTGQVTEVNKDTFWPIVKSAGPKVVVLDMYTQWCGPCKVMAPKFQEMSEKDQDVVFLKLDCNQDNKSLAKELGIKVVPTFKILKDGKVVKEVTGAKLDELIQAIETVKSS</sequence>
<proteinExistence type="evidence at transcript level"/>
<comment type="function">
    <text evidence="1">Thiol-disulfide oxidoreductase involved in the redox regulation of enzymes of both reductive pentose phosphate pathway (Calvin-Benson cycle) and oxidative pentose phosphate pathway.</text>
</comment>
<comment type="subcellular location">
    <subcellularLocation>
        <location evidence="4">Plastid</location>
        <location evidence="4">Chloroplast</location>
    </subcellularLocation>
</comment>
<comment type="similarity">
    <text evidence="4">Belongs to the thioredoxin family. Plant F-type subfamily.</text>
</comment>
<organism>
    <name type="scientific">Oryza sativa subsp. japonica</name>
    <name type="common">Rice</name>
    <dbReference type="NCBI Taxonomy" id="39947"/>
    <lineage>
        <taxon>Eukaryota</taxon>
        <taxon>Viridiplantae</taxon>
        <taxon>Streptophyta</taxon>
        <taxon>Embryophyta</taxon>
        <taxon>Tracheophyta</taxon>
        <taxon>Spermatophyta</taxon>
        <taxon>Magnoliopsida</taxon>
        <taxon>Liliopsida</taxon>
        <taxon>Poales</taxon>
        <taxon>Poaceae</taxon>
        <taxon>BOP clade</taxon>
        <taxon>Oryzoideae</taxon>
        <taxon>Oryzeae</taxon>
        <taxon>Oryzinae</taxon>
        <taxon>Oryza</taxon>
        <taxon>Oryza sativa</taxon>
    </lineage>
</organism>
<dbReference type="EMBL" id="AP003436">
    <property type="protein sequence ID" value="BAB90300.1"/>
    <property type="molecule type" value="Genomic_DNA"/>
</dbReference>
<dbReference type="EMBL" id="AP008207">
    <property type="protein sequence ID" value="BAF07081.1"/>
    <property type="molecule type" value="Genomic_DNA"/>
</dbReference>
<dbReference type="EMBL" id="AP014957">
    <property type="protein sequence ID" value="BAS75851.1"/>
    <property type="molecule type" value="Genomic_DNA"/>
</dbReference>
<dbReference type="EMBL" id="CM000138">
    <property type="protein sequence ID" value="EAZ14590.1"/>
    <property type="molecule type" value="Genomic_DNA"/>
</dbReference>
<dbReference type="EMBL" id="AK101264">
    <property type="protein sequence ID" value="BAG94981.1"/>
    <property type="molecule type" value="mRNA"/>
</dbReference>
<dbReference type="RefSeq" id="XP_015616604.1">
    <property type="nucleotide sequence ID" value="XM_015761118.1"/>
</dbReference>
<dbReference type="SMR" id="Q8S091"/>
<dbReference type="FunCoup" id="Q8S091">
    <property type="interactions" value="655"/>
</dbReference>
<dbReference type="STRING" id="39947.Q8S091"/>
<dbReference type="PaxDb" id="39947-Q8S091"/>
<dbReference type="EnsemblPlants" id="Os01t0913000-01">
    <property type="protein sequence ID" value="Os01t0913000-01"/>
    <property type="gene ID" value="Os01g0913000"/>
</dbReference>
<dbReference type="Gramene" id="Os01t0913000-01">
    <property type="protein sequence ID" value="Os01t0913000-01"/>
    <property type="gene ID" value="Os01g0913000"/>
</dbReference>
<dbReference type="KEGG" id="dosa:Os01g0913000"/>
<dbReference type="eggNOG" id="KOG0907">
    <property type="taxonomic scope" value="Eukaryota"/>
</dbReference>
<dbReference type="HOGENOM" id="CLU_090389_9_3_1"/>
<dbReference type="InParanoid" id="Q8S091"/>
<dbReference type="OMA" id="HTERACV"/>
<dbReference type="OrthoDB" id="10263751at2759"/>
<dbReference type="Proteomes" id="UP000000763">
    <property type="component" value="Chromosome 1"/>
</dbReference>
<dbReference type="Proteomes" id="UP000007752">
    <property type="component" value="Chromosome 1"/>
</dbReference>
<dbReference type="Proteomes" id="UP000059680">
    <property type="component" value="Chromosome 1"/>
</dbReference>
<dbReference type="GO" id="GO:0009507">
    <property type="term" value="C:chloroplast"/>
    <property type="evidence" value="ECO:0007669"/>
    <property type="project" value="UniProtKB-SubCell"/>
</dbReference>
<dbReference type="CDD" id="cd02947">
    <property type="entry name" value="TRX_family"/>
    <property type="match status" value="1"/>
</dbReference>
<dbReference type="Gene3D" id="3.40.30.10">
    <property type="entry name" value="Glutaredoxin"/>
    <property type="match status" value="1"/>
</dbReference>
<dbReference type="InterPro" id="IPR036249">
    <property type="entry name" value="Thioredoxin-like_sf"/>
</dbReference>
<dbReference type="InterPro" id="IPR017937">
    <property type="entry name" value="Thioredoxin_CS"/>
</dbReference>
<dbReference type="InterPro" id="IPR013766">
    <property type="entry name" value="Thioredoxin_domain"/>
</dbReference>
<dbReference type="PANTHER" id="PTHR46115">
    <property type="entry name" value="THIOREDOXIN-LIKE PROTEIN 1"/>
    <property type="match status" value="1"/>
</dbReference>
<dbReference type="Pfam" id="PF00085">
    <property type="entry name" value="Thioredoxin"/>
    <property type="match status" value="1"/>
</dbReference>
<dbReference type="PRINTS" id="PR00421">
    <property type="entry name" value="THIOREDOXIN"/>
</dbReference>
<dbReference type="SUPFAM" id="SSF52833">
    <property type="entry name" value="Thioredoxin-like"/>
    <property type="match status" value="1"/>
</dbReference>
<dbReference type="PROSITE" id="PS00194">
    <property type="entry name" value="THIOREDOXIN_1"/>
    <property type="match status" value="1"/>
</dbReference>
<dbReference type="PROSITE" id="PS51352">
    <property type="entry name" value="THIOREDOXIN_2"/>
    <property type="match status" value="1"/>
</dbReference>